<comment type="similarity">
    <text evidence="1">Belongs to the UPF0102 family.</text>
</comment>
<dbReference type="EMBL" id="CP000726">
    <property type="protein sequence ID" value="ABS34357.1"/>
    <property type="molecule type" value="Genomic_DNA"/>
</dbReference>
<dbReference type="RefSeq" id="WP_003384683.1">
    <property type="nucleotide sequence ID" value="NC_009697.1"/>
</dbReference>
<dbReference type="SMR" id="A7FW04"/>
<dbReference type="KEGG" id="cba:CLB_2304"/>
<dbReference type="HOGENOM" id="CLU_115353_2_1_9"/>
<dbReference type="GO" id="GO:0003676">
    <property type="term" value="F:nucleic acid binding"/>
    <property type="evidence" value="ECO:0007669"/>
    <property type="project" value="InterPro"/>
</dbReference>
<dbReference type="CDD" id="cd20736">
    <property type="entry name" value="PoNe_Nuclease"/>
    <property type="match status" value="1"/>
</dbReference>
<dbReference type="Gene3D" id="3.40.1350.10">
    <property type="match status" value="1"/>
</dbReference>
<dbReference type="HAMAP" id="MF_00048">
    <property type="entry name" value="UPF0102"/>
    <property type="match status" value="1"/>
</dbReference>
<dbReference type="InterPro" id="IPR011335">
    <property type="entry name" value="Restrct_endonuc-II-like"/>
</dbReference>
<dbReference type="InterPro" id="IPR011856">
    <property type="entry name" value="tRNA_endonuc-like_dom_sf"/>
</dbReference>
<dbReference type="InterPro" id="IPR003509">
    <property type="entry name" value="UPF0102_YraN-like"/>
</dbReference>
<dbReference type="NCBIfam" id="NF009150">
    <property type="entry name" value="PRK12497.1-3"/>
    <property type="match status" value="1"/>
</dbReference>
<dbReference type="NCBIfam" id="NF009154">
    <property type="entry name" value="PRK12497.3-3"/>
    <property type="match status" value="1"/>
</dbReference>
<dbReference type="NCBIfam" id="TIGR00252">
    <property type="entry name" value="YraN family protein"/>
    <property type="match status" value="1"/>
</dbReference>
<dbReference type="PANTHER" id="PTHR34039">
    <property type="entry name" value="UPF0102 PROTEIN YRAN"/>
    <property type="match status" value="1"/>
</dbReference>
<dbReference type="PANTHER" id="PTHR34039:SF1">
    <property type="entry name" value="UPF0102 PROTEIN YRAN"/>
    <property type="match status" value="1"/>
</dbReference>
<dbReference type="Pfam" id="PF02021">
    <property type="entry name" value="UPF0102"/>
    <property type="match status" value="1"/>
</dbReference>
<dbReference type="SUPFAM" id="SSF52980">
    <property type="entry name" value="Restriction endonuclease-like"/>
    <property type="match status" value="1"/>
</dbReference>
<feature type="chain" id="PRO_1000009202" description="UPF0102 protein CLB_2304">
    <location>
        <begin position="1"/>
        <end position="123"/>
    </location>
</feature>
<evidence type="ECO:0000255" key="1">
    <source>
        <dbReference type="HAMAP-Rule" id="MF_00048"/>
    </source>
</evidence>
<accession>A7FW04</accession>
<organism>
    <name type="scientific">Clostridium botulinum (strain ATCC 19397 / Type A)</name>
    <dbReference type="NCBI Taxonomy" id="441770"/>
    <lineage>
        <taxon>Bacteria</taxon>
        <taxon>Bacillati</taxon>
        <taxon>Bacillota</taxon>
        <taxon>Clostridia</taxon>
        <taxon>Eubacteriales</taxon>
        <taxon>Clostridiaceae</taxon>
        <taxon>Clostridium</taxon>
    </lineage>
</organism>
<protein>
    <recommendedName>
        <fullName evidence="1">UPF0102 protein CLB_2304</fullName>
    </recommendedName>
</protein>
<gene>
    <name type="ordered locus">CLB_2304</name>
</gene>
<reference key="1">
    <citation type="journal article" date="2007" name="PLoS ONE">
        <title>Analysis of the neurotoxin complex genes in Clostridium botulinum A1-A4 and B1 strains: BoNT/A3, /Ba4 and /B1 clusters are located within plasmids.</title>
        <authorList>
            <person name="Smith T.J."/>
            <person name="Hill K.K."/>
            <person name="Foley B.T."/>
            <person name="Detter J.C."/>
            <person name="Munk A.C."/>
            <person name="Bruce D.C."/>
            <person name="Doggett N.A."/>
            <person name="Smith L.A."/>
            <person name="Marks J.D."/>
            <person name="Xie G."/>
            <person name="Brettin T.S."/>
        </authorList>
    </citation>
    <scope>NUCLEOTIDE SEQUENCE [LARGE SCALE GENOMIC DNA]</scope>
    <source>
        <strain>ATCC 19397 / Type A</strain>
    </source>
</reference>
<sequence>MHYCNKDIGSFGETIAVDYIKNCGYIILERNFRCKLGEIDIIAKDKNFIVFIEVKTRYSYIYGSPSEAITFRKQNKIYKTAQLYIIKKAIHNKFYFRFDVIEVILNTLNSNYSVKLIKNAFQI</sequence>
<name>Y2304_CLOB1</name>
<proteinExistence type="inferred from homology"/>